<feature type="chain" id="PRO_0000432612" description="Putative plant UBX domain-containing protein 14">
    <location>
        <begin position="1"/>
        <end position="417"/>
    </location>
</feature>
<feature type="domain" description="UBX" evidence="1">
    <location>
        <begin position="335"/>
        <end position="415"/>
    </location>
</feature>
<organism>
    <name type="scientific">Arabidopsis thaliana</name>
    <name type="common">Mouse-ear cress</name>
    <dbReference type="NCBI Taxonomy" id="3702"/>
    <lineage>
        <taxon>Eukaryota</taxon>
        <taxon>Viridiplantae</taxon>
        <taxon>Streptophyta</taxon>
        <taxon>Embryophyta</taxon>
        <taxon>Tracheophyta</taxon>
        <taxon>Spermatophyta</taxon>
        <taxon>Magnoliopsida</taxon>
        <taxon>eudicotyledons</taxon>
        <taxon>Gunneridae</taxon>
        <taxon>Pentapetalae</taxon>
        <taxon>rosids</taxon>
        <taxon>malvids</taxon>
        <taxon>Brassicales</taxon>
        <taxon>Brassicaceae</taxon>
        <taxon>Camelineae</taxon>
        <taxon>Arabidopsis</taxon>
    </lineage>
</organism>
<reference key="1">
    <citation type="journal article" date="1998" name="Nature">
        <title>Analysis of 1.9 Mb of contiguous sequence from chromosome 4 of Arabidopsis thaliana.</title>
        <authorList>
            <person name="Bevan M."/>
            <person name="Bancroft I."/>
            <person name="Bent E."/>
            <person name="Love K."/>
            <person name="Goodman H.M."/>
            <person name="Dean C."/>
            <person name="Bergkamp R."/>
            <person name="Dirkse W."/>
            <person name="van Staveren M."/>
            <person name="Stiekema W."/>
            <person name="Drost L."/>
            <person name="Ridley P."/>
            <person name="Hudson S.-A."/>
            <person name="Patel K."/>
            <person name="Murphy G."/>
            <person name="Piffanelli P."/>
            <person name="Wedler H."/>
            <person name="Wedler E."/>
            <person name="Wambutt R."/>
            <person name="Weitzenegger T."/>
            <person name="Pohl T."/>
            <person name="Terryn N."/>
            <person name="Gielen J."/>
            <person name="Villarroel R."/>
            <person name="De Clercq R."/>
            <person name="van Montagu M."/>
            <person name="Lecharny A."/>
            <person name="Aubourg S."/>
            <person name="Gy I."/>
            <person name="Kreis M."/>
            <person name="Lao N."/>
            <person name="Kavanagh T."/>
            <person name="Hempel S."/>
            <person name="Kotter P."/>
            <person name="Entian K.-D."/>
            <person name="Rieger M."/>
            <person name="Schaefer M."/>
            <person name="Funk B."/>
            <person name="Mueller-Auer S."/>
            <person name="Silvey M."/>
            <person name="James R."/>
            <person name="Monfort A."/>
            <person name="Pons A."/>
            <person name="Puigdomenech P."/>
            <person name="Douka A."/>
            <person name="Voukelatou E."/>
            <person name="Milioni D."/>
            <person name="Hatzopoulos P."/>
            <person name="Piravandi E."/>
            <person name="Obermaier B."/>
            <person name="Hilbert H."/>
            <person name="Duesterhoeft A."/>
            <person name="Moores T."/>
            <person name="Jones J.D.G."/>
            <person name="Eneva T."/>
            <person name="Palme K."/>
            <person name="Benes V."/>
            <person name="Rechmann S."/>
            <person name="Ansorge W."/>
            <person name="Cooke R."/>
            <person name="Berger C."/>
            <person name="Delseny M."/>
            <person name="Voet M."/>
            <person name="Volckaert G."/>
            <person name="Mewes H.-W."/>
            <person name="Klosterman S."/>
            <person name="Schueller C."/>
            <person name="Chalwatzis N."/>
        </authorList>
    </citation>
    <scope>NUCLEOTIDE SEQUENCE [LARGE SCALE GENOMIC DNA]</scope>
    <source>
        <strain>cv. Columbia</strain>
    </source>
</reference>
<reference key="2">
    <citation type="journal article" date="1999" name="Nature">
        <title>Sequence and analysis of chromosome 4 of the plant Arabidopsis thaliana.</title>
        <authorList>
            <person name="Mayer K.F.X."/>
            <person name="Schueller C."/>
            <person name="Wambutt R."/>
            <person name="Murphy G."/>
            <person name="Volckaert G."/>
            <person name="Pohl T."/>
            <person name="Duesterhoeft A."/>
            <person name="Stiekema W."/>
            <person name="Entian K.-D."/>
            <person name="Terryn N."/>
            <person name="Harris B."/>
            <person name="Ansorge W."/>
            <person name="Brandt P."/>
            <person name="Grivell L.A."/>
            <person name="Rieger M."/>
            <person name="Weichselgartner M."/>
            <person name="de Simone V."/>
            <person name="Obermaier B."/>
            <person name="Mache R."/>
            <person name="Mueller M."/>
            <person name="Kreis M."/>
            <person name="Delseny M."/>
            <person name="Puigdomenech P."/>
            <person name="Watson M."/>
            <person name="Schmidtheini T."/>
            <person name="Reichert B."/>
            <person name="Portetelle D."/>
            <person name="Perez-Alonso M."/>
            <person name="Boutry M."/>
            <person name="Bancroft I."/>
            <person name="Vos P."/>
            <person name="Hoheisel J."/>
            <person name="Zimmermann W."/>
            <person name="Wedler H."/>
            <person name="Ridley P."/>
            <person name="Langham S.-A."/>
            <person name="McCullagh B."/>
            <person name="Bilham L."/>
            <person name="Robben J."/>
            <person name="van der Schueren J."/>
            <person name="Grymonprez B."/>
            <person name="Chuang Y.-J."/>
            <person name="Vandenbussche F."/>
            <person name="Braeken M."/>
            <person name="Weltjens I."/>
            <person name="Voet M."/>
            <person name="Bastiaens I."/>
            <person name="Aert R."/>
            <person name="Defoor E."/>
            <person name="Weitzenegger T."/>
            <person name="Bothe G."/>
            <person name="Ramsperger U."/>
            <person name="Hilbert H."/>
            <person name="Braun M."/>
            <person name="Holzer E."/>
            <person name="Brandt A."/>
            <person name="Peters S."/>
            <person name="van Staveren M."/>
            <person name="Dirkse W."/>
            <person name="Mooijman P."/>
            <person name="Klein Lankhorst R."/>
            <person name="Rose M."/>
            <person name="Hauf J."/>
            <person name="Koetter P."/>
            <person name="Berneiser S."/>
            <person name="Hempel S."/>
            <person name="Feldpausch M."/>
            <person name="Lamberth S."/>
            <person name="Van den Daele H."/>
            <person name="De Keyser A."/>
            <person name="Buysshaert C."/>
            <person name="Gielen J."/>
            <person name="Villarroel R."/>
            <person name="De Clercq R."/>
            <person name="van Montagu M."/>
            <person name="Rogers J."/>
            <person name="Cronin A."/>
            <person name="Quail M.A."/>
            <person name="Bray-Allen S."/>
            <person name="Clark L."/>
            <person name="Doggett J."/>
            <person name="Hall S."/>
            <person name="Kay M."/>
            <person name="Lennard N."/>
            <person name="McLay K."/>
            <person name="Mayes R."/>
            <person name="Pettett A."/>
            <person name="Rajandream M.A."/>
            <person name="Lyne M."/>
            <person name="Benes V."/>
            <person name="Rechmann S."/>
            <person name="Borkova D."/>
            <person name="Bloecker H."/>
            <person name="Scharfe M."/>
            <person name="Grimm M."/>
            <person name="Loehnert T.-H."/>
            <person name="Dose S."/>
            <person name="de Haan M."/>
            <person name="Maarse A.C."/>
            <person name="Schaefer M."/>
            <person name="Mueller-Auer S."/>
            <person name="Gabel C."/>
            <person name="Fuchs M."/>
            <person name="Fartmann B."/>
            <person name="Granderath K."/>
            <person name="Dauner D."/>
            <person name="Herzl A."/>
            <person name="Neumann S."/>
            <person name="Argiriou A."/>
            <person name="Vitale D."/>
            <person name="Liguori R."/>
            <person name="Piravandi E."/>
            <person name="Massenet O."/>
            <person name="Quigley F."/>
            <person name="Clabauld G."/>
            <person name="Muendlein A."/>
            <person name="Felber R."/>
            <person name="Schnabl S."/>
            <person name="Hiller R."/>
            <person name="Schmidt W."/>
            <person name="Lecharny A."/>
            <person name="Aubourg S."/>
            <person name="Chefdor F."/>
            <person name="Cooke R."/>
            <person name="Berger C."/>
            <person name="Monfort A."/>
            <person name="Casacuberta E."/>
            <person name="Gibbons T."/>
            <person name="Weber N."/>
            <person name="Vandenbol M."/>
            <person name="Bargues M."/>
            <person name="Terol J."/>
            <person name="Torres A."/>
            <person name="Perez-Perez A."/>
            <person name="Purnelle B."/>
            <person name="Bent E."/>
            <person name="Johnson S."/>
            <person name="Tacon D."/>
            <person name="Jesse T."/>
            <person name="Heijnen L."/>
            <person name="Schwarz S."/>
            <person name="Scholler P."/>
            <person name="Heber S."/>
            <person name="Francs P."/>
            <person name="Bielke C."/>
            <person name="Frishman D."/>
            <person name="Haase D."/>
            <person name="Lemcke K."/>
            <person name="Mewes H.-W."/>
            <person name="Stocker S."/>
            <person name="Zaccaria P."/>
            <person name="Bevan M."/>
            <person name="Wilson R.K."/>
            <person name="de la Bastide M."/>
            <person name="Habermann K."/>
            <person name="Parnell L."/>
            <person name="Dedhia N."/>
            <person name="Gnoj L."/>
            <person name="Schutz K."/>
            <person name="Huang E."/>
            <person name="Spiegel L."/>
            <person name="Sekhon M."/>
            <person name="Murray J."/>
            <person name="Sheet P."/>
            <person name="Cordes M."/>
            <person name="Abu-Threideh J."/>
            <person name="Stoneking T."/>
            <person name="Kalicki J."/>
            <person name="Graves T."/>
            <person name="Harmon G."/>
            <person name="Edwards J."/>
            <person name="Latreille P."/>
            <person name="Courtney L."/>
            <person name="Cloud J."/>
            <person name="Abbott A."/>
            <person name="Scott K."/>
            <person name="Johnson D."/>
            <person name="Minx P."/>
            <person name="Bentley D."/>
            <person name="Fulton B."/>
            <person name="Miller N."/>
            <person name="Greco T."/>
            <person name="Kemp K."/>
            <person name="Kramer J."/>
            <person name="Fulton L."/>
            <person name="Mardis E."/>
            <person name="Dante M."/>
            <person name="Pepin K."/>
            <person name="Hillier L.W."/>
            <person name="Nelson J."/>
            <person name="Spieth J."/>
            <person name="Ryan E."/>
            <person name="Andrews S."/>
            <person name="Geisel C."/>
            <person name="Layman D."/>
            <person name="Du H."/>
            <person name="Ali J."/>
            <person name="Berghoff A."/>
            <person name="Jones K."/>
            <person name="Drone K."/>
            <person name="Cotton M."/>
            <person name="Joshu C."/>
            <person name="Antonoiu B."/>
            <person name="Zidanic M."/>
            <person name="Strong C."/>
            <person name="Sun H."/>
            <person name="Lamar B."/>
            <person name="Yordan C."/>
            <person name="Ma P."/>
            <person name="Zhong J."/>
            <person name="Preston R."/>
            <person name="Vil D."/>
            <person name="Shekher M."/>
            <person name="Matero A."/>
            <person name="Shah R."/>
            <person name="Swaby I.K."/>
            <person name="O'Shaughnessy A."/>
            <person name="Rodriguez M."/>
            <person name="Hoffman J."/>
            <person name="Till S."/>
            <person name="Granat S."/>
            <person name="Shohdy N."/>
            <person name="Hasegawa A."/>
            <person name="Hameed A."/>
            <person name="Lodhi M."/>
            <person name="Johnson A."/>
            <person name="Chen E."/>
            <person name="Marra M.A."/>
            <person name="Martienssen R."/>
            <person name="McCombie W.R."/>
        </authorList>
    </citation>
    <scope>NUCLEOTIDE SEQUENCE [LARGE SCALE GENOMIC DNA]</scope>
    <source>
        <strain>cv. Columbia</strain>
    </source>
</reference>
<reference key="3">
    <citation type="journal article" date="2017" name="Plant J.">
        <title>Araport11: a complete reannotation of the Arabidopsis thaliana reference genome.</title>
        <authorList>
            <person name="Cheng C.Y."/>
            <person name="Krishnakumar V."/>
            <person name="Chan A.P."/>
            <person name="Thibaud-Nissen F."/>
            <person name="Schobel S."/>
            <person name="Town C.D."/>
        </authorList>
    </citation>
    <scope>GENOME REANNOTATION</scope>
    <source>
        <strain>cv. Columbia</strain>
    </source>
</reference>
<reference key="4">
    <citation type="book" date="2005" name="Proceedings of the 16th international conference on Arabidopsis research">
        <title>The plant UBX-domain containing (PUX) protein family regulates the function of Arabidopsis CDC48, a conserved essential AAA-ATPase.</title>
        <authorList>
            <person name="Posthuma R."/>
            <person name="Rancour D."/>
            <person name="Park S."/>
            <person name="Bates B."/>
            <person name="Bednarek S."/>
        </authorList>
    </citation>
    <scope>GENE FAMILY</scope>
</reference>
<protein>
    <recommendedName>
        <fullName evidence="2">Putative plant UBX domain-containing protein 14</fullName>
        <shortName evidence="2">PUX14</shortName>
    </recommendedName>
</protein>
<accession>P0DKI4</accession>
<accession>F4JUN8</accession>
<accession>O23283</accession>
<name>PUX14_ARATH</name>
<comment type="alternative products">
    <event type="alternative splicing"/>
    <isoform>
        <id>P0DKI4-1</id>
        <name>1</name>
        <sequence type="displayed"/>
    </isoform>
    <text>A number of isoforms are produced. According to EST sequences.</text>
</comment>
<comment type="caution">
    <text evidence="3">Could be the product of a pseudogene.</text>
</comment>
<comment type="sequence caution" evidence="3">
    <conflict type="erroneous gene model prediction">
        <sequence resource="EMBL-CDS" id="CAB10204"/>
    </conflict>
    <text>The predicted gene At4g14250 has been split into 2 genes: At4g14245 and At4g14250.</text>
</comment>
<comment type="sequence caution" evidence="3">
    <conflict type="erroneous termination">
        <sequence resource="EMBL-CDS" id="CAB10204"/>
    </conflict>
    <text>Truncated C-terminus.</text>
</comment>
<comment type="sequence caution" evidence="3">
    <conflict type="erroneous gene model prediction">
        <sequence resource="EMBL-CDS" id="CAB78467"/>
    </conflict>
    <text>The predicted gene At4g14250 has been split into 2 genes: At4g14245 and At4g14250.</text>
</comment>
<comment type="sequence caution" evidence="3">
    <conflict type="erroneous termination">
        <sequence resource="EMBL-CDS" id="CAB78467"/>
    </conflict>
    <text>Truncated C-terminus.</text>
</comment>
<proteinExistence type="uncertain"/>
<evidence type="ECO:0000255" key="1">
    <source>
        <dbReference type="PROSITE-ProRule" id="PRU00215"/>
    </source>
</evidence>
<evidence type="ECO:0000303" key="2">
    <source ref="4"/>
</evidence>
<evidence type="ECO:0000305" key="3"/>
<evidence type="ECO:0000312" key="4">
    <source>
        <dbReference type="Araport" id="AT4G14250"/>
    </source>
</evidence>
<evidence type="ECO:0000312" key="5">
    <source>
        <dbReference type="EMBL" id="CAB10204.1"/>
    </source>
</evidence>
<evidence type="ECO:0000312" key="6">
    <source>
        <dbReference type="EMBL" id="CAB78467.1"/>
    </source>
</evidence>
<gene>
    <name evidence="2" type="primary">PUX14</name>
    <name evidence="4" type="ordered locus">At4g14250</name>
    <name evidence="5" type="ORF">dl3165c</name>
    <name evidence="6" type="ORF">FCAALL.151</name>
</gene>
<dbReference type="EMBL" id="Z97335">
    <property type="protein sequence ID" value="CAB10204.1"/>
    <property type="status" value="ALT_SEQ"/>
    <property type="molecule type" value="Genomic_DNA"/>
</dbReference>
<dbReference type="EMBL" id="AL161538">
    <property type="protein sequence ID" value="CAB78467.1"/>
    <property type="status" value="ALT_SEQ"/>
    <property type="molecule type" value="Genomic_DNA"/>
</dbReference>
<dbReference type="EMBL" id="CP002687">
    <property type="status" value="NOT_ANNOTATED_CDS"/>
    <property type="molecule type" value="Genomic_DNA"/>
</dbReference>
<dbReference type="PIR" id="B71404">
    <property type="entry name" value="B71404"/>
</dbReference>
<dbReference type="SMR" id="P0DKI4"/>
<dbReference type="FunCoup" id="P0DKI4">
    <property type="interactions" value="2905"/>
</dbReference>
<dbReference type="STRING" id="3702.P0DKI4"/>
<dbReference type="TCDB" id="3.A.16.1.5">
    <property type="family name" value="the endoplasmic reticular retrotranslocon (er-rt) family"/>
</dbReference>
<dbReference type="PaxDb" id="3702-AT4G14250.1"/>
<dbReference type="ProteomicsDB" id="226089">
    <molecule id="P0DKI4-1"/>
</dbReference>
<dbReference type="Araport" id="AT4G14250"/>
<dbReference type="TAIR" id="AT4G14250"/>
<dbReference type="eggNOG" id="KOG1364">
    <property type="taxonomic scope" value="Eukaryota"/>
</dbReference>
<dbReference type="eggNOG" id="KOG2309">
    <property type="taxonomic scope" value="Eukaryota"/>
</dbReference>
<dbReference type="InParanoid" id="P0DKI4"/>
<dbReference type="Proteomes" id="UP000006548">
    <property type="component" value="Chromosome 4"/>
</dbReference>
<dbReference type="ExpressionAtlas" id="P0DKI4">
    <property type="expression patterns" value="baseline and differential"/>
</dbReference>
<dbReference type="GO" id="GO:0005634">
    <property type="term" value="C:nucleus"/>
    <property type="evidence" value="ECO:0000318"/>
    <property type="project" value="GO_Central"/>
</dbReference>
<dbReference type="GO" id="GO:0043130">
    <property type="term" value="F:ubiquitin binding"/>
    <property type="evidence" value="ECO:0000318"/>
    <property type="project" value="GO_Central"/>
</dbReference>
<dbReference type="GO" id="GO:0043161">
    <property type="term" value="P:proteasome-mediated ubiquitin-dependent protein catabolic process"/>
    <property type="evidence" value="ECO:0000318"/>
    <property type="project" value="GO_Central"/>
</dbReference>
<dbReference type="CDD" id="cd02958">
    <property type="entry name" value="UAS"/>
    <property type="match status" value="1"/>
</dbReference>
<dbReference type="CDD" id="cd14273">
    <property type="entry name" value="UBA_TAP-C_like"/>
    <property type="match status" value="1"/>
</dbReference>
<dbReference type="CDD" id="cd01767">
    <property type="entry name" value="UBX"/>
    <property type="match status" value="1"/>
</dbReference>
<dbReference type="Gene3D" id="1.10.8.10">
    <property type="entry name" value="DNA helicase RuvA subunit, C-terminal domain"/>
    <property type="match status" value="1"/>
</dbReference>
<dbReference type="Gene3D" id="3.40.30.10">
    <property type="entry name" value="Glutaredoxin"/>
    <property type="match status" value="1"/>
</dbReference>
<dbReference type="Gene3D" id="3.10.20.90">
    <property type="entry name" value="Phosphatidylinositol 3-kinase Catalytic Subunit, Chain A, domain 1"/>
    <property type="match status" value="1"/>
</dbReference>
<dbReference type="InterPro" id="IPR036249">
    <property type="entry name" value="Thioredoxin-like_sf"/>
</dbReference>
<dbReference type="InterPro" id="IPR006577">
    <property type="entry name" value="UAS"/>
</dbReference>
<dbReference type="InterPro" id="IPR009060">
    <property type="entry name" value="UBA-like_sf"/>
</dbReference>
<dbReference type="InterPro" id="IPR029071">
    <property type="entry name" value="Ubiquitin-like_domsf"/>
</dbReference>
<dbReference type="InterPro" id="IPR001012">
    <property type="entry name" value="UBX_dom"/>
</dbReference>
<dbReference type="InterPro" id="IPR050730">
    <property type="entry name" value="UBX_domain-protein"/>
</dbReference>
<dbReference type="PANTHER" id="PTHR23322">
    <property type="entry name" value="FAS-ASSOCIATED PROTEIN"/>
    <property type="match status" value="1"/>
</dbReference>
<dbReference type="PANTHER" id="PTHR23322:SF78">
    <property type="entry name" value="PLANT UBX DOMAIN-CONTAINING PROTEIN 16-RELATED"/>
    <property type="match status" value="1"/>
</dbReference>
<dbReference type="Pfam" id="PF13899">
    <property type="entry name" value="Thioredoxin_7"/>
    <property type="match status" value="1"/>
</dbReference>
<dbReference type="Pfam" id="PF14555">
    <property type="entry name" value="UBA_4"/>
    <property type="match status" value="1"/>
</dbReference>
<dbReference type="Pfam" id="PF00789">
    <property type="entry name" value="UBX"/>
    <property type="match status" value="1"/>
</dbReference>
<dbReference type="SMART" id="SM00594">
    <property type="entry name" value="UAS"/>
    <property type="match status" value="1"/>
</dbReference>
<dbReference type="SUPFAM" id="SSF52833">
    <property type="entry name" value="Thioredoxin-like"/>
    <property type="match status" value="1"/>
</dbReference>
<dbReference type="SUPFAM" id="SSF46934">
    <property type="entry name" value="UBA-like"/>
    <property type="match status" value="1"/>
</dbReference>
<dbReference type="SUPFAM" id="SSF54236">
    <property type="entry name" value="Ubiquitin-like"/>
    <property type="match status" value="1"/>
</dbReference>
<dbReference type="PROSITE" id="PS50033">
    <property type="entry name" value="UBX"/>
    <property type="match status" value="1"/>
</dbReference>
<keyword id="KW-0025">Alternative splicing</keyword>
<keyword id="KW-1185">Reference proteome</keyword>
<keyword id="KW-0833">Ubl conjugation pathway</keyword>
<sequence length="417" mass="47499">METATRTHQQRKLISSFLDITVNQTVEIATQFLEATTWNLEDAINLFLIARRNPHHHHGEELVPLPLPSKKNTLYDYDPFMSHNTSVAVCPEEIWDDESTSEESDSRLSSLYRPPPSLFFHGSFEDAKATSSREDLWLLVNLQSTTEFASHLLNRDLWPHDAVFQAIKSSFILLQVYDDTSEGQKISTFYKIDSVPPVVLLIDPITGQKMRMWSGVIEPQGFLEDLMKYMDSGPHEHVASLTSNKRMKTEKISCSSNNADDQDMATFWGNAIEEEKTVIKSGKEETFTSDRVVAPSWGPEFEDIMTLSEHEEETCLSCDLLEFPVLTEEPKADCDRSVVCSICVRFPDGRRKQRKFLKSEPIQLLWSFCYSHMEESEKKEFKLVQAIPGASKTLDYGAKATFDQSGIANSMISVTWE</sequence>